<protein>
    <recommendedName>
        <fullName>ATP-dependent RNA helicase DBP9</fullName>
        <ecNumber>3.6.4.13</ecNumber>
    </recommendedName>
</protein>
<gene>
    <name type="primary">DBP9</name>
    <name type="ORF">SNOG_02955</name>
</gene>
<accession>Q0UZ59</accession>
<evidence type="ECO:0000250" key="1"/>
<evidence type="ECO:0000255" key="2">
    <source>
        <dbReference type="PROSITE-ProRule" id="PRU00541"/>
    </source>
</evidence>
<evidence type="ECO:0000255" key="3">
    <source>
        <dbReference type="PROSITE-ProRule" id="PRU00542"/>
    </source>
</evidence>
<evidence type="ECO:0000256" key="4">
    <source>
        <dbReference type="SAM" id="MobiDB-lite"/>
    </source>
</evidence>
<evidence type="ECO:0000305" key="5"/>
<feature type="chain" id="PRO_0000256051" description="ATP-dependent RNA helicase DBP9">
    <location>
        <begin position="1"/>
        <end position="597"/>
    </location>
</feature>
<feature type="domain" description="Helicase ATP-binding" evidence="2">
    <location>
        <begin position="78"/>
        <end position="249"/>
    </location>
</feature>
<feature type="domain" description="Helicase C-terminal" evidence="3">
    <location>
        <begin position="260"/>
        <end position="469"/>
    </location>
</feature>
<feature type="region of interest" description="Disordered" evidence="4">
    <location>
        <begin position="1"/>
        <end position="43"/>
    </location>
</feature>
<feature type="region of interest" description="Disordered" evidence="4">
    <location>
        <begin position="352"/>
        <end position="374"/>
    </location>
</feature>
<feature type="short sequence motif" description="Q motif">
    <location>
        <begin position="47"/>
        <end position="75"/>
    </location>
</feature>
<feature type="short sequence motif" description="DEAD box">
    <location>
        <begin position="197"/>
        <end position="200"/>
    </location>
</feature>
<feature type="compositionally biased region" description="Basic and acidic residues" evidence="4">
    <location>
        <begin position="1"/>
        <end position="13"/>
    </location>
</feature>
<feature type="binding site" evidence="2">
    <location>
        <begin position="91"/>
        <end position="98"/>
    </location>
    <ligand>
        <name>ATP</name>
        <dbReference type="ChEBI" id="CHEBI:30616"/>
    </ligand>
</feature>
<sequence>MAMKRKLNEHDVPEPESPQSPKRRASDASQSEPASPPAPTPAKEVVASFAELQLEPRLLRGIRDQKWGSPTAVQSKAIPLALQGRDILARSGTGTGKTGAYLLPILHNTLLRKGKTSLILVPTKELALQITKVAKALSAHCGQAVRIQNIAGKESEVVTKAKLADNPDIVIATPARASANINTGALAVTELAHLVVDEGDLVMGYGFKEDLDQIAQNIPKGVQMFLMSATLNTEVESLGSLLCNDPVVLKLDDLDKDSKRVKQYVIKCAEEEKFLLIYAMFKLGLIKGKTIVFVGDTDRSYRVKLFLEQFGIKSCVLNSELPLASRLHIVEEFNKNIYNILIASDETEILGSQKKADESRPKKKPKTDKEAKNDSGVSRGIDFLNVSCVLNFDFPATYKSYFHRIGRTARAGKSGTAISFIIPKDKYRKHKSTTFAGCENDEEVLKKVEKHQEAGQKLENYNFDMKRLEPFRYRFGDALRSVTRIAIREARIKEIRLELSKSQKLSRYFEENPEALAHLRHDQTLNHPARIQPHLKHVPDYLLPGGSRKPADVGFVGLNVPRVNKRQYVKGKGRKVVRRNGKVDPLKTFNARGKGKK</sequence>
<comment type="function">
    <text evidence="1">ATP-binding RNA helicase involved in the biogenesis of 60S ribosomal subunits and is required for the normal formation of 25S and 5.8S rRNAs.</text>
</comment>
<comment type="catalytic activity">
    <reaction>
        <text>ATP + H2O = ADP + phosphate + H(+)</text>
        <dbReference type="Rhea" id="RHEA:13065"/>
        <dbReference type="ChEBI" id="CHEBI:15377"/>
        <dbReference type="ChEBI" id="CHEBI:15378"/>
        <dbReference type="ChEBI" id="CHEBI:30616"/>
        <dbReference type="ChEBI" id="CHEBI:43474"/>
        <dbReference type="ChEBI" id="CHEBI:456216"/>
        <dbReference type="EC" id="3.6.4.13"/>
    </reaction>
</comment>
<comment type="subcellular location">
    <subcellularLocation>
        <location evidence="1">Nucleus</location>
        <location evidence="1">Nucleolus</location>
    </subcellularLocation>
</comment>
<comment type="domain">
    <text>The Q motif is unique to and characteristic of the DEAD box family of RNA helicases and controls ATP binding and hydrolysis.</text>
</comment>
<comment type="similarity">
    <text evidence="5">Belongs to the DEAD box helicase family. DDX56/DBP9 subfamily.</text>
</comment>
<dbReference type="EC" id="3.6.4.13"/>
<dbReference type="EMBL" id="CH445328">
    <property type="protein sequence ID" value="EAT89686.1"/>
    <property type="molecule type" value="Genomic_DNA"/>
</dbReference>
<dbReference type="RefSeq" id="XP_001793547.1">
    <property type="nucleotide sequence ID" value="XM_001793495.1"/>
</dbReference>
<dbReference type="SMR" id="Q0UZ59"/>
<dbReference type="FunCoup" id="Q0UZ59">
    <property type="interactions" value="901"/>
</dbReference>
<dbReference type="STRING" id="321614.Q0UZ59"/>
<dbReference type="EnsemblFungi" id="SNOT_02955">
    <property type="protein sequence ID" value="SNOT_02955"/>
    <property type="gene ID" value="SNOG_02955"/>
</dbReference>
<dbReference type="GeneID" id="5970404"/>
<dbReference type="KEGG" id="pno:SNOG_02955"/>
<dbReference type="VEuPathDB" id="FungiDB:JI435_029550"/>
<dbReference type="eggNOG" id="KOG0346">
    <property type="taxonomic scope" value="Eukaryota"/>
</dbReference>
<dbReference type="HOGENOM" id="CLU_003041_17_1_1"/>
<dbReference type="InParanoid" id="Q0UZ59"/>
<dbReference type="OMA" id="NASEQCV"/>
<dbReference type="OrthoDB" id="1191041at2759"/>
<dbReference type="Proteomes" id="UP000001055">
    <property type="component" value="Unassembled WGS sequence"/>
</dbReference>
<dbReference type="GO" id="GO:0005730">
    <property type="term" value="C:nucleolus"/>
    <property type="evidence" value="ECO:0000318"/>
    <property type="project" value="GO_Central"/>
</dbReference>
<dbReference type="GO" id="GO:0005524">
    <property type="term" value="F:ATP binding"/>
    <property type="evidence" value="ECO:0007669"/>
    <property type="project" value="UniProtKB-KW"/>
</dbReference>
<dbReference type="GO" id="GO:0016887">
    <property type="term" value="F:ATP hydrolysis activity"/>
    <property type="evidence" value="ECO:0007669"/>
    <property type="project" value="RHEA"/>
</dbReference>
<dbReference type="GO" id="GO:0003678">
    <property type="term" value="F:DNA helicase activity"/>
    <property type="evidence" value="ECO:0007669"/>
    <property type="project" value="EnsemblFungi"/>
</dbReference>
<dbReference type="GO" id="GO:0033677">
    <property type="term" value="F:DNA/RNA helicase activity"/>
    <property type="evidence" value="ECO:0007669"/>
    <property type="project" value="EnsemblFungi"/>
</dbReference>
<dbReference type="GO" id="GO:0003723">
    <property type="term" value="F:RNA binding"/>
    <property type="evidence" value="ECO:0007669"/>
    <property type="project" value="UniProtKB-KW"/>
</dbReference>
<dbReference type="GO" id="GO:0003724">
    <property type="term" value="F:RNA helicase activity"/>
    <property type="evidence" value="ECO:0007669"/>
    <property type="project" value="UniProtKB-EC"/>
</dbReference>
<dbReference type="GO" id="GO:0000463">
    <property type="term" value="P:maturation of LSU-rRNA from tricistronic rRNA transcript (SSU-rRNA, 5.8S rRNA, LSU-rRNA)"/>
    <property type="evidence" value="ECO:0007669"/>
    <property type="project" value="EnsemblFungi"/>
</dbReference>
<dbReference type="CDD" id="cd17961">
    <property type="entry name" value="DEADc_DDX56"/>
    <property type="match status" value="1"/>
</dbReference>
<dbReference type="CDD" id="cd18787">
    <property type="entry name" value="SF2_C_DEAD"/>
    <property type="match status" value="1"/>
</dbReference>
<dbReference type="Gene3D" id="3.40.50.300">
    <property type="entry name" value="P-loop containing nucleotide triphosphate hydrolases"/>
    <property type="match status" value="2"/>
</dbReference>
<dbReference type="InterPro" id="IPR011545">
    <property type="entry name" value="DEAD/DEAH_box_helicase_dom"/>
</dbReference>
<dbReference type="InterPro" id="IPR050079">
    <property type="entry name" value="DEAD_box_RNA_helicase"/>
</dbReference>
<dbReference type="InterPro" id="IPR014001">
    <property type="entry name" value="Helicase_ATP-bd"/>
</dbReference>
<dbReference type="InterPro" id="IPR001650">
    <property type="entry name" value="Helicase_C-like"/>
</dbReference>
<dbReference type="InterPro" id="IPR027417">
    <property type="entry name" value="P-loop_NTPase"/>
</dbReference>
<dbReference type="InterPro" id="IPR014014">
    <property type="entry name" value="RNA_helicase_DEAD_Q_motif"/>
</dbReference>
<dbReference type="PANTHER" id="PTHR47959">
    <property type="entry name" value="ATP-DEPENDENT RNA HELICASE RHLE-RELATED"/>
    <property type="match status" value="1"/>
</dbReference>
<dbReference type="PANTHER" id="PTHR47959:SF21">
    <property type="entry name" value="DEAD-BOX HELICASE 56"/>
    <property type="match status" value="1"/>
</dbReference>
<dbReference type="Pfam" id="PF00270">
    <property type="entry name" value="DEAD"/>
    <property type="match status" value="1"/>
</dbReference>
<dbReference type="Pfam" id="PF00271">
    <property type="entry name" value="Helicase_C"/>
    <property type="match status" value="1"/>
</dbReference>
<dbReference type="SMART" id="SM00487">
    <property type="entry name" value="DEXDc"/>
    <property type="match status" value="1"/>
</dbReference>
<dbReference type="SMART" id="SM00490">
    <property type="entry name" value="HELICc"/>
    <property type="match status" value="1"/>
</dbReference>
<dbReference type="SUPFAM" id="SSF52540">
    <property type="entry name" value="P-loop containing nucleoside triphosphate hydrolases"/>
    <property type="match status" value="2"/>
</dbReference>
<dbReference type="PROSITE" id="PS51192">
    <property type="entry name" value="HELICASE_ATP_BIND_1"/>
    <property type="match status" value="1"/>
</dbReference>
<dbReference type="PROSITE" id="PS51194">
    <property type="entry name" value="HELICASE_CTER"/>
    <property type="match status" value="1"/>
</dbReference>
<dbReference type="PROSITE" id="PS51195">
    <property type="entry name" value="Q_MOTIF"/>
    <property type="match status" value="1"/>
</dbReference>
<reference key="1">
    <citation type="journal article" date="2007" name="Plant Cell">
        <title>Dothideomycete-plant interactions illuminated by genome sequencing and EST analysis of the wheat pathogen Stagonospora nodorum.</title>
        <authorList>
            <person name="Hane J.K."/>
            <person name="Lowe R.G.T."/>
            <person name="Solomon P.S."/>
            <person name="Tan K.-C."/>
            <person name="Schoch C.L."/>
            <person name="Spatafora J.W."/>
            <person name="Crous P.W."/>
            <person name="Kodira C.D."/>
            <person name="Birren B.W."/>
            <person name="Galagan J.E."/>
            <person name="Torriani S.F.F."/>
            <person name="McDonald B.A."/>
            <person name="Oliver R.P."/>
        </authorList>
    </citation>
    <scope>NUCLEOTIDE SEQUENCE [LARGE SCALE GENOMIC DNA]</scope>
    <source>
        <strain>SN15 / ATCC MYA-4574 / FGSC 10173</strain>
    </source>
</reference>
<keyword id="KW-0067">ATP-binding</keyword>
<keyword id="KW-0347">Helicase</keyword>
<keyword id="KW-0378">Hydrolase</keyword>
<keyword id="KW-0547">Nucleotide-binding</keyword>
<keyword id="KW-0539">Nucleus</keyword>
<keyword id="KW-0690">Ribosome biogenesis</keyword>
<keyword id="KW-0694">RNA-binding</keyword>
<keyword id="KW-0698">rRNA processing</keyword>
<proteinExistence type="inferred from homology"/>
<organism>
    <name type="scientific">Phaeosphaeria nodorum (strain SN15 / ATCC MYA-4574 / FGSC 10173)</name>
    <name type="common">Glume blotch fungus</name>
    <name type="synonym">Parastagonospora nodorum</name>
    <dbReference type="NCBI Taxonomy" id="321614"/>
    <lineage>
        <taxon>Eukaryota</taxon>
        <taxon>Fungi</taxon>
        <taxon>Dikarya</taxon>
        <taxon>Ascomycota</taxon>
        <taxon>Pezizomycotina</taxon>
        <taxon>Dothideomycetes</taxon>
        <taxon>Pleosporomycetidae</taxon>
        <taxon>Pleosporales</taxon>
        <taxon>Pleosporineae</taxon>
        <taxon>Phaeosphaeriaceae</taxon>
        <taxon>Parastagonospora</taxon>
    </lineage>
</organism>
<name>DBP9_PHANO</name>